<keyword id="KW-0067">ATP-binding</keyword>
<keyword id="KW-0963">Cytoplasm</keyword>
<keyword id="KW-0418">Kinase</keyword>
<keyword id="KW-0520">NAD</keyword>
<keyword id="KW-0521">NADP</keyword>
<keyword id="KW-0547">Nucleotide-binding</keyword>
<keyword id="KW-1185">Reference proteome</keyword>
<keyword id="KW-0808">Transferase</keyword>
<evidence type="ECO:0000255" key="1">
    <source>
        <dbReference type="HAMAP-Rule" id="MF_00361"/>
    </source>
</evidence>
<sequence>MMRIGIIARFDVAEAVEIAERVASFLLNRGVEITVDLKLTEELPQLREYGEDIRNMDADMILTIGGDGTILRTRSLIEDKEIPILGINMGTVGFLTEVDPENVFSALEAVLRGEYAVEKRTLLSVYHNDELPSALNEVVLMTRRPAKMLHIEISVDDEVVEELRADGIIIATPSGSTAYSMSAGGPIVDPRVEAFLIVPICPFKLSARPLVVSNKSVIRVKLLRKGKKAIAVIDGQYEEEINHMDEVIFRKSERKAHFVRLSKDFYRKVREKLIEGGIDSIKG</sequence>
<dbReference type="EC" id="2.7.1.23" evidence="1"/>
<dbReference type="EMBL" id="AE000666">
    <property type="protein sequence ID" value="AAB85370.1"/>
    <property type="molecule type" value="Genomic_DNA"/>
</dbReference>
<dbReference type="PIR" id="E69216">
    <property type="entry name" value="E69216"/>
</dbReference>
<dbReference type="RefSeq" id="WP_010876505.1">
    <property type="nucleotide sequence ID" value="NC_000916.1"/>
</dbReference>
<dbReference type="SMR" id="O26958"/>
<dbReference type="STRING" id="187420.MTH_872"/>
<dbReference type="PaxDb" id="187420-MTH_872"/>
<dbReference type="EnsemblBacteria" id="AAB85370">
    <property type="protein sequence ID" value="AAB85370"/>
    <property type="gene ID" value="MTH_872"/>
</dbReference>
<dbReference type="GeneID" id="1471280"/>
<dbReference type="KEGG" id="mth:MTH_872"/>
<dbReference type="PATRIC" id="fig|187420.15.peg.856"/>
<dbReference type="HOGENOM" id="CLU_008831_0_2_2"/>
<dbReference type="InParanoid" id="O26958"/>
<dbReference type="Proteomes" id="UP000005223">
    <property type="component" value="Chromosome"/>
</dbReference>
<dbReference type="GO" id="GO:0005737">
    <property type="term" value="C:cytoplasm"/>
    <property type="evidence" value="ECO:0007669"/>
    <property type="project" value="UniProtKB-SubCell"/>
</dbReference>
<dbReference type="GO" id="GO:0005524">
    <property type="term" value="F:ATP binding"/>
    <property type="evidence" value="ECO:0007669"/>
    <property type="project" value="UniProtKB-KW"/>
</dbReference>
<dbReference type="GO" id="GO:0046872">
    <property type="term" value="F:metal ion binding"/>
    <property type="evidence" value="ECO:0007669"/>
    <property type="project" value="UniProtKB-UniRule"/>
</dbReference>
<dbReference type="GO" id="GO:0003951">
    <property type="term" value="F:NAD+ kinase activity"/>
    <property type="evidence" value="ECO:0007669"/>
    <property type="project" value="UniProtKB-UniRule"/>
</dbReference>
<dbReference type="GO" id="GO:0019674">
    <property type="term" value="P:NAD metabolic process"/>
    <property type="evidence" value="ECO:0007669"/>
    <property type="project" value="InterPro"/>
</dbReference>
<dbReference type="GO" id="GO:0006741">
    <property type="term" value="P:NADP biosynthetic process"/>
    <property type="evidence" value="ECO:0007669"/>
    <property type="project" value="UniProtKB-UniRule"/>
</dbReference>
<dbReference type="FunFam" id="2.60.200.30:FF:000009">
    <property type="entry name" value="Poly(P)/ATP NAD kinase"/>
    <property type="match status" value="1"/>
</dbReference>
<dbReference type="Gene3D" id="3.40.50.10330">
    <property type="entry name" value="Probable inorganic polyphosphate/atp-NAD kinase, domain 1"/>
    <property type="match status" value="1"/>
</dbReference>
<dbReference type="Gene3D" id="2.60.200.30">
    <property type="entry name" value="Probable inorganic polyphosphate/atp-NAD kinase, domain 2"/>
    <property type="match status" value="1"/>
</dbReference>
<dbReference type="HAMAP" id="MF_00361">
    <property type="entry name" value="NAD_kinase"/>
    <property type="match status" value="1"/>
</dbReference>
<dbReference type="InterPro" id="IPR017438">
    <property type="entry name" value="ATP-NAD_kinase_N"/>
</dbReference>
<dbReference type="InterPro" id="IPR017437">
    <property type="entry name" value="ATP-NAD_kinase_PpnK-typ_C"/>
</dbReference>
<dbReference type="InterPro" id="IPR016064">
    <property type="entry name" value="NAD/diacylglycerol_kinase_sf"/>
</dbReference>
<dbReference type="InterPro" id="IPR002504">
    <property type="entry name" value="NADK"/>
</dbReference>
<dbReference type="NCBIfam" id="NF002984">
    <property type="entry name" value="PRK03708.1"/>
    <property type="match status" value="1"/>
</dbReference>
<dbReference type="PANTHER" id="PTHR20275:SF43">
    <property type="entry name" value="BIFUNCTIONAL NADP PHOSPHATASE_NAD KINASE"/>
    <property type="match status" value="1"/>
</dbReference>
<dbReference type="PANTHER" id="PTHR20275">
    <property type="entry name" value="NAD KINASE"/>
    <property type="match status" value="1"/>
</dbReference>
<dbReference type="Pfam" id="PF01513">
    <property type="entry name" value="NAD_kinase"/>
    <property type="match status" value="1"/>
</dbReference>
<dbReference type="Pfam" id="PF20143">
    <property type="entry name" value="NAD_kinase_C"/>
    <property type="match status" value="1"/>
</dbReference>
<dbReference type="SUPFAM" id="SSF111331">
    <property type="entry name" value="NAD kinase/diacylglycerol kinase-like"/>
    <property type="match status" value="1"/>
</dbReference>
<proteinExistence type="inferred from homology"/>
<gene>
    <name evidence="1" type="primary">nadK</name>
    <name type="ordered locus">MTH_872</name>
</gene>
<protein>
    <recommendedName>
        <fullName evidence="1">NAD kinase</fullName>
        <ecNumber evidence="1">2.7.1.23</ecNumber>
    </recommendedName>
    <alternativeName>
        <fullName evidence="1">ATP-dependent NAD kinase</fullName>
    </alternativeName>
</protein>
<organism>
    <name type="scientific">Methanothermobacter thermautotrophicus (strain ATCC 29096 / DSM 1053 / JCM 10044 / NBRC 100330 / Delta H)</name>
    <name type="common">Methanobacterium thermoautotrophicum</name>
    <dbReference type="NCBI Taxonomy" id="187420"/>
    <lineage>
        <taxon>Archaea</taxon>
        <taxon>Methanobacteriati</taxon>
        <taxon>Methanobacteriota</taxon>
        <taxon>Methanomada group</taxon>
        <taxon>Methanobacteria</taxon>
        <taxon>Methanobacteriales</taxon>
        <taxon>Methanobacteriaceae</taxon>
        <taxon>Methanothermobacter</taxon>
    </lineage>
</organism>
<name>NADK_METTH</name>
<reference key="1">
    <citation type="journal article" date="1997" name="J. Bacteriol.">
        <title>Complete genome sequence of Methanobacterium thermoautotrophicum deltaH: functional analysis and comparative genomics.</title>
        <authorList>
            <person name="Smith D.R."/>
            <person name="Doucette-Stamm L.A."/>
            <person name="Deloughery C."/>
            <person name="Lee H.-M."/>
            <person name="Dubois J."/>
            <person name="Aldredge T."/>
            <person name="Bashirzadeh R."/>
            <person name="Blakely D."/>
            <person name="Cook R."/>
            <person name="Gilbert K."/>
            <person name="Harrison D."/>
            <person name="Hoang L."/>
            <person name="Keagle P."/>
            <person name="Lumm W."/>
            <person name="Pothier B."/>
            <person name="Qiu D."/>
            <person name="Spadafora R."/>
            <person name="Vicare R."/>
            <person name="Wang Y."/>
            <person name="Wierzbowski J."/>
            <person name="Gibson R."/>
            <person name="Jiwani N."/>
            <person name="Caruso A."/>
            <person name="Bush D."/>
            <person name="Safer H."/>
            <person name="Patwell D."/>
            <person name="Prabhakar S."/>
            <person name="McDougall S."/>
            <person name="Shimer G."/>
            <person name="Goyal A."/>
            <person name="Pietrovski S."/>
            <person name="Church G.M."/>
            <person name="Daniels C.J."/>
            <person name="Mao J.-I."/>
            <person name="Rice P."/>
            <person name="Noelling J."/>
            <person name="Reeve J.N."/>
        </authorList>
    </citation>
    <scope>NUCLEOTIDE SEQUENCE [LARGE SCALE GENOMIC DNA]</scope>
    <source>
        <strain>ATCC 29096 / DSM 1053 / JCM 10044 / NBRC 100330 / Delta H</strain>
    </source>
</reference>
<accession>O26958</accession>
<comment type="function">
    <text evidence="1">Involved in the regulation of the intracellular balance of NAD and NADP, and is a key enzyme in the biosynthesis of NADP. Catalyzes specifically the phosphorylation on 2'-hydroxyl of the adenosine moiety of NAD to yield NADP.</text>
</comment>
<comment type="catalytic activity">
    <reaction evidence="1">
        <text>NAD(+) + ATP = ADP + NADP(+) + H(+)</text>
        <dbReference type="Rhea" id="RHEA:18629"/>
        <dbReference type="ChEBI" id="CHEBI:15378"/>
        <dbReference type="ChEBI" id="CHEBI:30616"/>
        <dbReference type="ChEBI" id="CHEBI:57540"/>
        <dbReference type="ChEBI" id="CHEBI:58349"/>
        <dbReference type="ChEBI" id="CHEBI:456216"/>
        <dbReference type="EC" id="2.7.1.23"/>
    </reaction>
</comment>
<comment type="cofactor">
    <cofactor evidence="1">
        <name>a divalent metal cation</name>
        <dbReference type="ChEBI" id="CHEBI:60240"/>
    </cofactor>
</comment>
<comment type="subcellular location">
    <subcellularLocation>
        <location evidence="1">Cytoplasm</location>
    </subcellularLocation>
</comment>
<comment type="similarity">
    <text evidence="1">Belongs to the NAD kinase family.</text>
</comment>
<feature type="chain" id="PRO_0000120703" description="NAD kinase">
    <location>
        <begin position="1"/>
        <end position="283"/>
    </location>
</feature>
<feature type="active site" description="Proton acceptor" evidence="1">
    <location>
        <position position="67"/>
    </location>
</feature>
<feature type="binding site" evidence="1">
    <location>
        <begin position="67"/>
        <end position="68"/>
    </location>
    <ligand>
        <name>NAD(+)</name>
        <dbReference type="ChEBI" id="CHEBI:57540"/>
    </ligand>
</feature>
<feature type="binding site" evidence="1">
    <location>
        <position position="72"/>
    </location>
    <ligand>
        <name>NAD(+)</name>
        <dbReference type="ChEBI" id="CHEBI:57540"/>
    </ligand>
</feature>
<feature type="binding site" evidence="1">
    <location>
        <begin position="136"/>
        <end position="137"/>
    </location>
    <ligand>
        <name>NAD(+)</name>
        <dbReference type="ChEBI" id="CHEBI:57540"/>
    </ligand>
</feature>
<feature type="binding site" evidence="1">
    <location>
        <position position="147"/>
    </location>
    <ligand>
        <name>NAD(+)</name>
        <dbReference type="ChEBI" id="CHEBI:57540"/>
    </ligand>
</feature>
<feature type="binding site" evidence="1">
    <location>
        <position position="164"/>
    </location>
    <ligand>
        <name>NAD(+)</name>
        <dbReference type="ChEBI" id="CHEBI:57540"/>
    </ligand>
</feature>
<feature type="binding site" evidence="1">
    <location>
        <position position="166"/>
    </location>
    <ligand>
        <name>NAD(+)</name>
        <dbReference type="ChEBI" id="CHEBI:57540"/>
    </ligand>
</feature>
<feature type="binding site" evidence="1">
    <location>
        <begin position="177"/>
        <end position="182"/>
    </location>
    <ligand>
        <name>NAD(+)</name>
        <dbReference type="ChEBI" id="CHEBI:57540"/>
    </ligand>
</feature>
<feature type="binding site" evidence="1">
    <location>
        <position position="236"/>
    </location>
    <ligand>
        <name>NAD(+)</name>
        <dbReference type="ChEBI" id="CHEBI:57540"/>
    </ligand>
</feature>